<accession>Q7TSL3</accession>
<keyword id="KW-0158">Chromosome</keyword>
<keyword id="KW-0479">Metal-binding</keyword>
<keyword id="KW-0539">Nucleus</keyword>
<keyword id="KW-1185">Reference proteome</keyword>
<keyword id="KW-0677">Repeat</keyword>
<keyword id="KW-0833">Ubl conjugation pathway</keyword>
<keyword id="KW-0862">Zinc</keyword>
<keyword id="KW-0863">Zinc-finger</keyword>
<name>FBX11_RAT</name>
<organism>
    <name type="scientific">Rattus norvegicus</name>
    <name type="common">Rat</name>
    <dbReference type="NCBI Taxonomy" id="10116"/>
    <lineage>
        <taxon>Eukaryota</taxon>
        <taxon>Metazoa</taxon>
        <taxon>Chordata</taxon>
        <taxon>Craniata</taxon>
        <taxon>Vertebrata</taxon>
        <taxon>Euteleostomi</taxon>
        <taxon>Mammalia</taxon>
        <taxon>Eutheria</taxon>
        <taxon>Euarchontoglires</taxon>
        <taxon>Glires</taxon>
        <taxon>Rodentia</taxon>
        <taxon>Myomorpha</taxon>
        <taxon>Muroidea</taxon>
        <taxon>Muridae</taxon>
        <taxon>Murinae</taxon>
        <taxon>Rattus</taxon>
    </lineage>
</organism>
<evidence type="ECO:0000250" key="1">
    <source>
        <dbReference type="UniProtKB" id="Q86XK2"/>
    </source>
</evidence>
<evidence type="ECO:0000255" key="2">
    <source>
        <dbReference type="PROSITE-ProRule" id="PRU00080"/>
    </source>
</evidence>
<evidence type="ECO:0000255" key="3">
    <source>
        <dbReference type="PROSITE-ProRule" id="PRU00508"/>
    </source>
</evidence>
<evidence type="ECO:0000256" key="4">
    <source>
        <dbReference type="SAM" id="MobiDB-lite"/>
    </source>
</evidence>
<sequence length="843" mass="94042">MVAEESGPGAQNSPYQLRRKTLLPKRTACPTKNSMEGASTSTTENFGHRAKRARVSGKSQDLSAAPAEQYLQEKLPDEVVLKIFSYLLEQDLCRAACVCKRFSELANDPILWKRLYMEVFEYTRPMMHPEPGKFYQINPEEYEHPNPWKESFQQLYKGAHVKPGFAEHFYSNPARYKGRENMLYYDTIEDALGGVQEAHFDGLIFVHSGIYTDEWIYIESPITMIGAAPGKVADKVIIENTRDSTFVFMEGSEDAYVGYMTIRFNPDDKSAQHHNAHHCLEITVNCSPIIDHCIIRSTCTVGSAVCVSGQGACPTIKHCNISDCENVGLYITDHAQGIYEDNEISNNALAGIWVKNHGNPIIRRNHIHHGRDVGVFTFDHGMGYFESCNIHRNRIAGFEVKAYANPTVVRCEIHHGQTGGIYVHEKGRGQFIENKIYANNFAGVWITSNSDPTIRGNSIFNGNQGGVYIFGDGRGLIEGNDIYGNALAGIQIRTNSCPIVRHNKIHDGQHGGIYVHEKGQGVIEENEVYSNTLAGVWVTTGSTPVLRRNRIHSGKQVGVYFYDNGHGVLEDNDIYNHMYSGVQIRTGSNPKIRRNKIWGGQNGGILVYNSGLGCIEDNEIFDNAMAGVWIKTDSNPTLRRNKIHDGRDGGICIFNGGRGLLEENDIFRNAQAGVLISTNSHPVLRKNRIFDGFAAGIEITNHATATLEGNQIFNNRFGGLFLASGVNVTMKDNKIMNNQDAIEKAVSRGQCLYKISSYTSYPMHDFYRCHTCNTTDRNAICVNCIKKCHQGHDVEFIRHDRFFCDCGAGTLSNPCTLAGEPTHDTDTLYDSAPPIESNTLQHN</sequence>
<comment type="function">
    <text evidence="1">Substrate recognition component of a SCF (SKP1-CUL1-F-box protein) E3 ubiquitin-protein ligase complex which mediates the ubiquitination and subsequent proteasomal degradation of target proteins, such as DTL/CDT2, BCL6, SNAI1 and PRDM1/BLIMP1. The SCF(FBXO11) complex mediates ubiquitination and degradation of BCL6, thereby playing a role in the germinal center B-cells terminal differentiation toward memory B-cells and plasma cells. The SCF(FBXO11) complex also mediates ubiquitination and degradation of DTL, an important step for the regulation of TGF-beta signaling, cell migration and the timing of the cell-cycle progression and exit. The SCF(FBXO11) complex also catalyzes ubiquitination and degradation of GSK3B-phosphorylated SNAI1. Binds to and neddylates phosphorylated p53/TP53, inhibiting its transcriptional activity. Plays a role in the regulatiom of erythropoiesis but not myelopoiesis or megakaryopoiesis. Mechanistically, activates erythroid genes by mediating the degradation of BAHD1, a heterochromatin-associated protein that recruits corepressors to H3K27me3 marks. Participates in macrophage cell death and inflammation in response to bacterial toxins by regulating the expression of complement 5a receptor 1/C5AR1 and IL-1beta. Acts as a critical regulator to determine the level of MHC-II by mediating the recognition of degron at the P/S/T domain of CIITA leading to its ubiquitination and subsequent degradation via the proteasome. Participates in the antiviral repsonse by initiating the activation of TBK1-IRF3-IFN-I axis. Mediates the 'Lys-63'-linked ubiquitination of TRAF3 to strengthen the interaction between TRAF3 and TBK1.</text>
</comment>
<comment type="pathway">
    <text evidence="1">Protein modification; protein ubiquitination.</text>
</comment>
<comment type="subunit">
    <text evidence="1">Component of the SCF(FBXO11) complex consisting of CUL1, RBX1, SKP1 and FBXO11. Interacts with CIITA.</text>
</comment>
<comment type="subcellular location">
    <subcellularLocation>
        <location evidence="1">Nucleus</location>
    </subcellularLocation>
    <subcellularLocation>
        <location evidence="1">Chromosome</location>
    </subcellularLocation>
</comment>
<dbReference type="EMBL" id="AY274810">
    <property type="protein sequence ID" value="AAP42075.1"/>
    <property type="molecule type" value="mRNA"/>
</dbReference>
<dbReference type="RefSeq" id="NP_853662.1">
    <property type="nucleotide sequence ID" value="NM_181631.2"/>
</dbReference>
<dbReference type="RefSeq" id="XP_017449602.1">
    <property type="nucleotide sequence ID" value="XM_017594113.3"/>
</dbReference>
<dbReference type="SMR" id="Q7TSL3"/>
<dbReference type="FunCoup" id="Q7TSL3">
    <property type="interactions" value="5178"/>
</dbReference>
<dbReference type="STRING" id="10116.ENSRNOP00000021998"/>
<dbReference type="iPTMnet" id="Q7TSL3"/>
<dbReference type="PhosphoSitePlus" id="Q7TSL3"/>
<dbReference type="PaxDb" id="10116-ENSRNOP00000021998"/>
<dbReference type="GeneID" id="301674"/>
<dbReference type="KEGG" id="rno:301674"/>
<dbReference type="AGR" id="RGD:727935"/>
<dbReference type="CTD" id="80204"/>
<dbReference type="RGD" id="727935">
    <property type="gene designation" value="Fbxo11"/>
</dbReference>
<dbReference type="VEuPathDB" id="HostDB:ENSRNOG00000016396"/>
<dbReference type="eggNOG" id="KOG1777">
    <property type="taxonomic scope" value="Eukaryota"/>
</dbReference>
<dbReference type="HOGENOM" id="CLU_005078_1_0_1"/>
<dbReference type="InParanoid" id="Q7TSL3"/>
<dbReference type="OrthoDB" id="803at9989"/>
<dbReference type="PhylomeDB" id="Q7TSL3"/>
<dbReference type="Reactome" id="R-RNO-8951664">
    <property type="pathway name" value="Neddylation"/>
</dbReference>
<dbReference type="Reactome" id="R-RNO-983168">
    <property type="pathway name" value="Antigen processing: Ubiquitination &amp; Proteasome degradation"/>
</dbReference>
<dbReference type="UniPathway" id="UPA00143"/>
<dbReference type="PRO" id="PR:Q7TSL3"/>
<dbReference type="Proteomes" id="UP000002494">
    <property type="component" value="Chromosome 6"/>
</dbReference>
<dbReference type="Bgee" id="ENSRNOG00000016396">
    <property type="expression patterns" value="Expressed in cerebellum and 20 other cell types or tissues"/>
</dbReference>
<dbReference type="GO" id="GO:0005694">
    <property type="term" value="C:chromosome"/>
    <property type="evidence" value="ECO:0007669"/>
    <property type="project" value="UniProtKB-SubCell"/>
</dbReference>
<dbReference type="GO" id="GO:0005737">
    <property type="term" value="C:cytoplasm"/>
    <property type="evidence" value="ECO:0000266"/>
    <property type="project" value="RGD"/>
</dbReference>
<dbReference type="GO" id="GO:0005634">
    <property type="term" value="C:nucleus"/>
    <property type="evidence" value="ECO:0000266"/>
    <property type="project" value="RGD"/>
</dbReference>
<dbReference type="GO" id="GO:0016274">
    <property type="term" value="F:protein-arginine N-methyltransferase activity"/>
    <property type="evidence" value="ECO:0000266"/>
    <property type="project" value="RGD"/>
</dbReference>
<dbReference type="GO" id="GO:1990756">
    <property type="term" value="F:ubiquitin-like ligase-substrate adaptor activity"/>
    <property type="evidence" value="ECO:0000250"/>
    <property type="project" value="UniProtKB"/>
</dbReference>
<dbReference type="GO" id="GO:0004842">
    <property type="term" value="F:ubiquitin-protein transferase activity"/>
    <property type="evidence" value="ECO:0000266"/>
    <property type="project" value="RGD"/>
</dbReference>
<dbReference type="GO" id="GO:0008270">
    <property type="term" value="F:zinc ion binding"/>
    <property type="evidence" value="ECO:0007669"/>
    <property type="project" value="UniProtKB-KW"/>
</dbReference>
<dbReference type="GO" id="GO:1904878">
    <property type="term" value="P:negative regulation of calcium ion transmembrane transport via high voltage-gated calcium channel"/>
    <property type="evidence" value="ECO:0000315"/>
    <property type="project" value="RGD"/>
</dbReference>
<dbReference type="GO" id="GO:0010719">
    <property type="term" value="P:negative regulation of epithelial to mesenchymal transition"/>
    <property type="evidence" value="ECO:0000250"/>
    <property type="project" value="UniProtKB"/>
</dbReference>
<dbReference type="GO" id="GO:0045732">
    <property type="term" value="P:positive regulation of protein catabolic process"/>
    <property type="evidence" value="ECO:0000315"/>
    <property type="project" value="RGD"/>
</dbReference>
<dbReference type="GO" id="GO:0043161">
    <property type="term" value="P:proteasome-mediated ubiquitin-dependent protein catabolic process"/>
    <property type="evidence" value="ECO:0000250"/>
    <property type="project" value="UniProtKB"/>
</dbReference>
<dbReference type="GO" id="GO:0036211">
    <property type="term" value="P:protein modification process"/>
    <property type="evidence" value="ECO:0000266"/>
    <property type="project" value="RGD"/>
</dbReference>
<dbReference type="GO" id="GO:0016567">
    <property type="term" value="P:protein ubiquitination"/>
    <property type="evidence" value="ECO:0007669"/>
    <property type="project" value="UniProtKB-UniPathway"/>
</dbReference>
<dbReference type="GO" id="GO:0042981">
    <property type="term" value="P:regulation of apoptotic process"/>
    <property type="evidence" value="ECO:0000318"/>
    <property type="project" value="GO_Central"/>
</dbReference>
<dbReference type="GO" id="GO:0007605">
    <property type="term" value="P:sensory perception of sound"/>
    <property type="evidence" value="ECO:0000266"/>
    <property type="project" value="RGD"/>
</dbReference>
<dbReference type="GO" id="GO:0006511">
    <property type="term" value="P:ubiquitin-dependent protein catabolic process"/>
    <property type="evidence" value="ECO:0000318"/>
    <property type="project" value="GO_Central"/>
</dbReference>
<dbReference type="CDD" id="cd22091">
    <property type="entry name" value="F-box_FBXO11"/>
    <property type="match status" value="1"/>
</dbReference>
<dbReference type="CDD" id="cd19676">
    <property type="entry name" value="UBR-box_UBR6_FBXO11"/>
    <property type="match status" value="1"/>
</dbReference>
<dbReference type="FunFam" id="1.20.1280.50:FF:000003">
    <property type="entry name" value="F-box only protein 11"/>
    <property type="match status" value="1"/>
</dbReference>
<dbReference type="FunFam" id="2.160.20.10:FF:000005">
    <property type="entry name" value="F-box only protein 11"/>
    <property type="match status" value="1"/>
</dbReference>
<dbReference type="FunFam" id="2.160.20.10:FF:000006">
    <property type="entry name" value="F-box only protein 11"/>
    <property type="match status" value="1"/>
</dbReference>
<dbReference type="FunFam" id="2.160.20.10:FF:000007">
    <property type="entry name" value="F-box only protein 11"/>
    <property type="match status" value="1"/>
</dbReference>
<dbReference type="Gene3D" id="1.20.1280.50">
    <property type="match status" value="1"/>
</dbReference>
<dbReference type="Gene3D" id="2.160.20.10">
    <property type="entry name" value="Single-stranded right-handed beta-helix, Pectin lyase-like"/>
    <property type="match status" value="3"/>
</dbReference>
<dbReference type="InterPro" id="IPR039448">
    <property type="entry name" value="Beta_helix"/>
</dbReference>
<dbReference type="InterPro" id="IPR006633">
    <property type="entry name" value="Carb-bd_sugar_hydrolysis-dom"/>
</dbReference>
<dbReference type="InterPro" id="IPR036047">
    <property type="entry name" value="F-box-like_dom_sf"/>
</dbReference>
<dbReference type="InterPro" id="IPR001810">
    <property type="entry name" value="F-box_dom"/>
</dbReference>
<dbReference type="InterPro" id="IPR047505">
    <property type="entry name" value="F-box_FBXO11"/>
</dbReference>
<dbReference type="InterPro" id="IPR047504">
    <property type="entry name" value="FBXO11_UBR-box"/>
</dbReference>
<dbReference type="InterPro" id="IPR007742">
    <property type="entry name" value="NosD_dom"/>
</dbReference>
<dbReference type="InterPro" id="IPR022441">
    <property type="entry name" value="Para_beta_helix_rpt-2"/>
</dbReference>
<dbReference type="InterPro" id="IPR006626">
    <property type="entry name" value="PbH1"/>
</dbReference>
<dbReference type="InterPro" id="IPR012334">
    <property type="entry name" value="Pectin_lyas_fold"/>
</dbReference>
<dbReference type="InterPro" id="IPR011050">
    <property type="entry name" value="Pectin_lyase_fold/virulence"/>
</dbReference>
<dbReference type="InterPro" id="IPR051550">
    <property type="entry name" value="SCF-Subunits/Alg-Epimerases"/>
</dbReference>
<dbReference type="InterPro" id="IPR003126">
    <property type="entry name" value="Znf_UBR"/>
</dbReference>
<dbReference type="NCBIfam" id="TIGR03804">
    <property type="entry name" value="para_beta_helix"/>
    <property type="match status" value="4"/>
</dbReference>
<dbReference type="PANTHER" id="PTHR22990">
    <property type="entry name" value="F-BOX ONLY PROTEIN"/>
    <property type="match status" value="1"/>
</dbReference>
<dbReference type="PANTHER" id="PTHR22990:SF20">
    <property type="entry name" value="F-BOX ONLY PROTEIN 11"/>
    <property type="match status" value="1"/>
</dbReference>
<dbReference type="Pfam" id="PF13229">
    <property type="entry name" value="Beta_helix"/>
    <property type="match status" value="2"/>
</dbReference>
<dbReference type="Pfam" id="PF12937">
    <property type="entry name" value="F-box-like"/>
    <property type="match status" value="1"/>
</dbReference>
<dbReference type="Pfam" id="PF05048">
    <property type="entry name" value="NosD"/>
    <property type="match status" value="1"/>
</dbReference>
<dbReference type="Pfam" id="PF02207">
    <property type="entry name" value="zf-UBR"/>
    <property type="match status" value="1"/>
</dbReference>
<dbReference type="SMART" id="SM00722">
    <property type="entry name" value="CASH"/>
    <property type="match status" value="3"/>
</dbReference>
<dbReference type="SMART" id="SM00256">
    <property type="entry name" value="FBOX"/>
    <property type="match status" value="1"/>
</dbReference>
<dbReference type="SMART" id="SM00710">
    <property type="entry name" value="PbH1"/>
    <property type="match status" value="19"/>
</dbReference>
<dbReference type="SMART" id="SM00396">
    <property type="entry name" value="ZnF_UBR1"/>
    <property type="match status" value="1"/>
</dbReference>
<dbReference type="SUPFAM" id="SSF81383">
    <property type="entry name" value="F-box domain"/>
    <property type="match status" value="1"/>
</dbReference>
<dbReference type="SUPFAM" id="SSF51126">
    <property type="entry name" value="Pectin lyase-like"/>
    <property type="match status" value="3"/>
</dbReference>
<dbReference type="PROSITE" id="PS50181">
    <property type="entry name" value="FBOX"/>
    <property type="match status" value="1"/>
</dbReference>
<dbReference type="PROSITE" id="PS51157">
    <property type="entry name" value="ZF_UBR"/>
    <property type="match status" value="1"/>
</dbReference>
<proteinExistence type="evidence at transcript level"/>
<gene>
    <name type="primary">Fbxo11</name>
</gene>
<reference key="1">
    <citation type="submission" date="2003-04" db="EMBL/GenBank/DDBJ databases">
        <authorList>
            <person name="Shan Y.X."/>
            <person name="Ye G.M."/>
            <person name="Guo Z.K."/>
            <person name="Huang C.Q."/>
            <person name="Pan J."/>
            <person name="Yu L."/>
        </authorList>
    </citation>
    <scope>NUCLEOTIDE SEQUENCE [MRNA]</scope>
</reference>
<feature type="chain" id="PRO_0000119892" description="F-box only protein 11">
    <location>
        <begin position="1"/>
        <end position="843"/>
    </location>
</feature>
<feature type="domain" description="F-box" evidence="2">
    <location>
        <begin position="69"/>
        <end position="115"/>
    </location>
</feature>
<feature type="repeat" description="PbH1 1">
    <location>
        <begin position="311"/>
        <end position="333"/>
    </location>
</feature>
<feature type="repeat" description="PbH1 2">
    <location>
        <begin position="334"/>
        <end position="356"/>
    </location>
</feature>
<feature type="repeat" description="PbH1 3">
    <location>
        <begin position="357"/>
        <end position="379"/>
    </location>
</feature>
<feature type="repeat" description="PbH1 4">
    <location>
        <begin position="380"/>
        <end position="402"/>
    </location>
</feature>
<feature type="repeat" description="PbH1 5">
    <location>
        <begin position="403"/>
        <end position="425"/>
    </location>
</feature>
<feature type="repeat" description="PbH1 6">
    <location>
        <begin position="426"/>
        <end position="448"/>
    </location>
</feature>
<feature type="repeat" description="PbH1 7">
    <location>
        <begin position="449"/>
        <end position="471"/>
    </location>
</feature>
<feature type="repeat" description="PbH1 8">
    <location>
        <begin position="472"/>
        <end position="494"/>
    </location>
</feature>
<feature type="repeat" description="PbH1 9">
    <location>
        <begin position="495"/>
        <end position="517"/>
    </location>
</feature>
<feature type="repeat" description="PbH1 10">
    <location>
        <begin position="518"/>
        <end position="540"/>
    </location>
</feature>
<feature type="repeat" description="PbH1 11">
    <location>
        <begin position="541"/>
        <end position="563"/>
    </location>
</feature>
<feature type="repeat" description="PbH1 12">
    <location>
        <begin position="564"/>
        <end position="586"/>
    </location>
</feature>
<feature type="repeat" description="PbH1 13">
    <location>
        <begin position="587"/>
        <end position="609"/>
    </location>
</feature>
<feature type="repeat" description="PbH1 14">
    <location>
        <begin position="610"/>
        <end position="632"/>
    </location>
</feature>
<feature type="repeat" description="PbH1 15">
    <location>
        <begin position="633"/>
        <end position="655"/>
    </location>
</feature>
<feature type="repeat" description="PbH1 16">
    <location>
        <begin position="656"/>
        <end position="678"/>
    </location>
</feature>
<feature type="repeat" description="PbH1 17">
    <location>
        <begin position="679"/>
        <end position="701"/>
    </location>
</feature>
<feature type="repeat" description="PbH1 18">
    <location>
        <begin position="702"/>
        <end position="724"/>
    </location>
</feature>
<feature type="repeat" description="PbH1 19">
    <location>
        <begin position="725"/>
        <end position="746"/>
    </location>
</feature>
<feature type="zinc finger region" description="UBR-type" evidence="3">
    <location>
        <begin position="749"/>
        <end position="820"/>
    </location>
</feature>
<feature type="region of interest" description="Disordered" evidence="4">
    <location>
        <begin position="1"/>
        <end position="63"/>
    </location>
</feature>
<feature type="compositionally biased region" description="Polar residues" evidence="4">
    <location>
        <begin position="30"/>
        <end position="45"/>
    </location>
</feature>
<protein>
    <recommendedName>
        <fullName>F-box only protein 11</fullName>
    </recommendedName>
</protein>